<keyword id="KW-1185">Reference proteome</keyword>
<keyword id="KW-0687">Ribonucleoprotein</keyword>
<keyword id="KW-0689">Ribosomal protein</keyword>
<keyword id="KW-0694">RNA-binding</keyword>
<keyword id="KW-0699">rRNA-binding</keyword>
<gene>
    <name evidence="1" type="primary">rplB</name>
    <name type="ordered locus">Rru_A2685</name>
</gene>
<reference key="1">
    <citation type="journal article" date="2011" name="Stand. Genomic Sci.">
        <title>Complete genome sequence of Rhodospirillum rubrum type strain (S1).</title>
        <authorList>
            <person name="Munk A.C."/>
            <person name="Copeland A."/>
            <person name="Lucas S."/>
            <person name="Lapidus A."/>
            <person name="Del Rio T.G."/>
            <person name="Barry K."/>
            <person name="Detter J.C."/>
            <person name="Hammon N."/>
            <person name="Israni S."/>
            <person name="Pitluck S."/>
            <person name="Brettin T."/>
            <person name="Bruce D."/>
            <person name="Han C."/>
            <person name="Tapia R."/>
            <person name="Gilna P."/>
            <person name="Schmutz J."/>
            <person name="Larimer F."/>
            <person name="Land M."/>
            <person name="Kyrpides N.C."/>
            <person name="Mavromatis K."/>
            <person name="Richardson P."/>
            <person name="Rohde M."/>
            <person name="Goeker M."/>
            <person name="Klenk H.P."/>
            <person name="Zhang Y."/>
            <person name="Roberts G.P."/>
            <person name="Reslewic S."/>
            <person name="Schwartz D.C."/>
        </authorList>
    </citation>
    <scope>NUCLEOTIDE SEQUENCE [LARGE SCALE GENOMIC DNA]</scope>
    <source>
        <strain>ATCC 11170 / ATH 1.1.1 / DSM 467 / LMG 4362 / NCIMB 8255 / S1</strain>
    </source>
</reference>
<proteinExistence type="inferred from homology"/>
<feature type="chain" id="PRO_0000237234" description="Large ribosomal subunit protein uL2">
    <location>
        <begin position="1"/>
        <end position="279"/>
    </location>
</feature>
<feature type="region of interest" description="Disordered" evidence="2">
    <location>
        <begin position="223"/>
        <end position="279"/>
    </location>
</feature>
<feature type="compositionally biased region" description="Basic residues" evidence="2">
    <location>
        <begin position="270"/>
        <end position="279"/>
    </location>
</feature>
<name>RL2_RHORT</name>
<protein>
    <recommendedName>
        <fullName evidence="1">Large ribosomal subunit protein uL2</fullName>
    </recommendedName>
    <alternativeName>
        <fullName evidence="3">50S ribosomal protein L2</fullName>
    </alternativeName>
</protein>
<evidence type="ECO:0000255" key="1">
    <source>
        <dbReference type="HAMAP-Rule" id="MF_01320"/>
    </source>
</evidence>
<evidence type="ECO:0000256" key="2">
    <source>
        <dbReference type="SAM" id="MobiDB-lite"/>
    </source>
</evidence>
<evidence type="ECO:0000305" key="3"/>
<dbReference type="EMBL" id="CP000230">
    <property type="protein sequence ID" value="ABC23482.1"/>
    <property type="molecule type" value="Genomic_DNA"/>
</dbReference>
<dbReference type="RefSeq" id="WP_011390435.1">
    <property type="nucleotide sequence ID" value="NC_007643.1"/>
</dbReference>
<dbReference type="RefSeq" id="YP_427769.1">
    <property type="nucleotide sequence ID" value="NC_007643.1"/>
</dbReference>
<dbReference type="SMR" id="Q2RQW3"/>
<dbReference type="STRING" id="269796.Rru_A2685"/>
<dbReference type="EnsemblBacteria" id="ABC23482">
    <property type="protein sequence ID" value="ABC23482"/>
    <property type="gene ID" value="Rru_A2685"/>
</dbReference>
<dbReference type="KEGG" id="rru:Rru_A2685"/>
<dbReference type="PATRIC" id="fig|269796.9.peg.2792"/>
<dbReference type="eggNOG" id="COG0090">
    <property type="taxonomic scope" value="Bacteria"/>
</dbReference>
<dbReference type="HOGENOM" id="CLU_036235_2_1_5"/>
<dbReference type="PhylomeDB" id="Q2RQW3"/>
<dbReference type="Proteomes" id="UP000001929">
    <property type="component" value="Chromosome"/>
</dbReference>
<dbReference type="GO" id="GO:0015934">
    <property type="term" value="C:large ribosomal subunit"/>
    <property type="evidence" value="ECO:0007669"/>
    <property type="project" value="InterPro"/>
</dbReference>
<dbReference type="GO" id="GO:0019843">
    <property type="term" value="F:rRNA binding"/>
    <property type="evidence" value="ECO:0007669"/>
    <property type="project" value="UniProtKB-UniRule"/>
</dbReference>
<dbReference type="GO" id="GO:0003735">
    <property type="term" value="F:structural constituent of ribosome"/>
    <property type="evidence" value="ECO:0007669"/>
    <property type="project" value="InterPro"/>
</dbReference>
<dbReference type="GO" id="GO:0016740">
    <property type="term" value="F:transferase activity"/>
    <property type="evidence" value="ECO:0007669"/>
    <property type="project" value="InterPro"/>
</dbReference>
<dbReference type="GO" id="GO:0002181">
    <property type="term" value="P:cytoplasmic translation"/>
    <property type="evidence" value="ECO:0007669"/>
    <property type="project" value="TreeGrafter"/>
</dbReference>
<dbReference type="FunFam" id="2.30.30.30:FF:000001">
    <property type="entry name" value="50S ribosomal protein L2"/>
    <property type="match status" value="1"/>
</dbReference>
<dbReference type="FunFam" id="2.40.50.140:FF:000003">
    <property type="entry name" value="50S ribosomal protein L2"/>
    <property type="match status" value="1"/>
</dbReference>
<dbReference type="FunFam" id="4.10.950.10:FF:000001">
    <property type="entry name" value="50S ribosomal protein L2"/>
    <property type="match status" value="1"/>
</dbReference>
<dbReference type="Gene3D" id="2.30.30.30">
    <property type="match status" value="1"/>
</dbReference>
<dbReference type="Gene3D" id="2.40.50.140">
    <property type="entry name" value="Nucleic acid-binding proteins"/>
    <property type="match status" value="1"/>
</dbReference>
<dbReference type="Gene3D" id="4.10.950.10">
    <property type="entry name" value="Ribosomal protein L2, domain 3"/>
    <property type="match status" value="1"/>
</dbReference>
<dbReference type="HAMAP" id="MF_01320_B">
    <property type="entry name" value="Ribosomal_uL2_B"/>
    <property type="match status" value="1"/>
</dbReference>
<dbReference type="InterPro" id="IPR012340">
    <property type="entry name" value="NA-bd_OB-fold"/>
</dbReference>
<dbReference type="InterPro" id="IPR014722">
    <property type="entry name" value="Rib_uL2_dom2"/>
</dbReference>
<dbReference type="InterPro" id="IPR002171">
    <property type="entry name" value="Ribosomal_uL2"/>
</dbReference>
<dbReference type="InterPro" id="IPR005880">
    <property type="entry name" value="Ribosomal_uL2_bac/org-type"/>
</dbReference>
<dbReference type="InterPro" id="IPR022669">
    <property type="entry name" value="Ribosomal_uL2_C"/>
</dbReference>
<dbReference type="InterPro" id="IPR022671">
    <property type="entry name" value="Ribosomal_uL2_CS"/>
</dbReference>
<dbReference type="InterPro" id="IPR014726">
    <property type="entry name" value="Ribosomal_uL2_dom3"/>
</dbReference>
<dbReference type="InterPro" id="IPR022666">
    <property type="entry name" value="Ribosomal_uL2_RNA-bd_dom"/>
</dbReference>
<dbReference type="InterPro" id="IPR008991">
    <property type="entry name" value="Translation_prot_SH3-like_sf"/>
</dbReference>
<dbReference type="NCBIfam" id="TIGR01171">
    <property type="entry name" value="rplB_bact"/>
    <property type="match status" value="1"/>
</dbReference>
<dbReference type="PANTHER" id="PTHR13691:SF5">
    <property type="entry name" value="LARGE RIBOSOMAL SUBUNIT PROTEIN UL2M"/>
    <property type="match status" value="1"/>
</dbReference>
<dbReference type="PANTHER" id="PTHR13691">
    <property type="entry name" value="RIBOSOMAL PROTEIN L2"/>
    <property type="match status" value="1"/>
</dbReference>
<dbReference type="Pfam" id="PF00181">
    <property type="entry name" value="Ribosomal_L2"/>
    <property type="match status" value="1"/>
</dbReference>
<dbReference type="Pfam" id="PF03947">
    <property type="entry name" value="Ribosomal_L2_C"/>
    <property type="match status" value="1"/>
</dbReference>
<dbReference type="PIRSF" id="PIRSF002158">
    <property type="entry name" value="Ribosomal_L2"/>
    <property type="match status" value="1"/>
</dbReference>
<dbReference type="SMART" id="SM01383">
    <property type="entry name" value="Ribosomal_L2"/>
    <property type="match status" value="1"/>
</dbReference>
<dbReference type="SMART" id="SM01382">
    <property type="entry name" value="Ribosomal_L2_C"/>
    <property type="match status" value="1"/>
</dbReference>
<dbReference type="SUPFAM" id="SSF50249">
    <property type="entry name" value="Nucleic acid-binding proteins"/>
    <property type="match status" value="1"/>
</dbReference>
<dbReference type="SUPFAM" id="SSF50104">
    <property type="entry name" value="Translation proteins SH3-like domain"/>
    <property type="match status" value="1"/>
</dbReference>
<dbReference type="PROSITE" id="PS00467">
    <property type="entry name" value="RIBOSOMAL_L2"/>
    <property type="match status" value="1"/>
</dbReference>
<organism>
    <name type="scientific">Rhodospirillum rubrum (strain ATCC 11170 / ATH 1.1.1 / DSM 467 / LMG 4362 / NCIMB 8255 / S1)</name>
    <dbReference type="NCBI Taxonomy" id="269796"/>
    <lineage>
        <taxon>Bacteria</taxon>
        <taxon>Pseudomonadati</taxon>
        <taxon>Pseudomonadota</taxon>
        <taxon>Alphaproteobacteria</taxon>
        <taxon>Rhodospirillales</taxon>
        <taxon>Rhodospirillaceae</taxon>
        <taxon>Rhodospirillum</taxon>
    </lineage>
</organism>
<comment type="function">
    <text evidence="1">One of the primary rRNA binding proteins. Required for association of the 30S and 50S subunits to form the 70S ribosome, for tRNA binding and peptide bond formation. It has been suggested to have peptidyltransferase activity; this is somewhat controversial. Makes several contacts with the 16S rRNA in the 70S ribosome.</text>
</comment>
<comment type="subunit">
    <text evidence="1">Part of the 50S ribosomal subunit. Forms a bridge to the 30S subunit in the 70S ribosome.</text>
</comment>
<comment type="similarity">
    <text evidence="1">Belongs to the universal ribosomal protein uL2 family.</text>
</comment>
<accession>Q2RQW3</accession>
<sequence length="279" mass="30845">MALKQYNPVTPGMRNLVLVDRSDLYKGKPVKKLTEGLVKTGGRNNHGRVTSWWRGGGNKRRYRLIDFKRTKVDVAGRVERLEYDPNRTAFIALITYEDGEQTYILAPQRLQVGDAVISADRADIKPGNAMPLKNMPVGTIIHNVEMKPGKGGQLARSAGCYAQLIGKDAGYAQLRLSSGELRLVRGECLATVGAVSNPDNQNEKLGKAGRSRWMGRRPHVRGVVMNPVDHPHGGGEGRTSGGRHPVTPWGKPTKGKRTRSNKKTDSLIMRSRHLAKKKR</sequence>